<proteinExistence type="inferred from homology"/>
<reference key="1">
    <citation type="journal article" date="2001" name="Nature">
        <title>Complete genome sequence of Salmonella enterica serovar Typhimurium LT2.</title>
        <authorList>
            <person name="McClelland M."/>
            <person name="Sanderson K.E."/>
            <person name="Spieth J."/>
            <person name="Clifton S.W."/>
            <person name="Latreille P."/>
            <person name="Courtney L."/>
            <person name="Porwollik S."/>
            <person name="Ali J."/>
            <person name="Dante M."/>
            <person name="Du F."/>
            <person name="Hou S."/>
            <person name="Layman D."/>
            <person name="Leonard S."/>
            <person name="Nguyen C."/>
            <person name="Scott K."/>
            <person name="Holmes A."/>
            <person name="Grewal N."/>
            <person name="Mulvaney E."/>
            <person name="Ryan E."/>
            <person name="Sun H."/>
            <person name="Florea L."/>
            <person name="Miller W."/>
            <person name="Stoneking T."/>
            <person name="Nhan M."/>
            <person name="Waterston R."/>
            <person name="Wilson R.K."/>
        </authorList>
    </citation>
    <scope>NUCLEOTIDE SEQUENCE [LARGE SCALE GENOMIC DNA]</scope>
    <source>
        <strain>LT2 / SGSC1412 / ATCC 700720</strain>
    </source>
</reference>
<evidence type="ECO:0000255" key="1">
    <source>
        <dbReference type="HAMAP-Rule" id="MF_01596"/>
    </source>
</evidence>
<gene>
    <name evidence="1" type="primary">mgrB</name>
    <name type="ordered locus">STM1840</name>
</gene>
<keyword id="KW-0997">Cell inner membrane</keyword>
<keyword id="KW-1003">Cell membrane</keyword>
<keyword id="KW-0472">Membrane</keyword>
<keyword id="KW-1185">Reference proteome</keyword>
<keyword id="KW-0812">Transmembrane</keyword>
<keyword id="KW-1133">Transmembrane helix</keyword>
<feature type="chain" id="PRO_0000330680" description="PhoP/PhoQ regulator MgrB">
    <location>
        <begin position="1"/>
        <end position="47"/>
    </location>
</feature>
<feature type="transmembrane region" description="Helical" evidence="1">
    <location>
        <begin position="6"/>
        <end position="26"/>
    </location>
</feature>
<organism>
    <name type="scientific">Salmonella typhimurium (strain LT2 / SGSC1412 / ATCC 700720)</name>
    <dbReference type="NCBI Taxonomy" id="99287"/>
    <lineage>
        <taxon>Bacteria</taxon>
        <taxon>Pseudomonadati</taxon>
        <taxon>Pseudomonadota</taxon>
        <taxon>Gammaproteobacteria</taxon>
        <taxon>Enterobacterales</taxon>
        <taxon>Enterobacteriaceae</taxon>
        <taxon>Salmonella</taxon>
    </lineage>
</organism>
<protein>
    <recommendedName>
        <fullName evidence="1">PhoP/PhoQ regulator MgrB</fullName>
    </recommendedName>
</protein>
<name>MGRB_SALTY</name>
<sequence length="47" mass="5520">MKKFRWVVLGIVVVVCLLLWAQVFNIMCDQDVQFFSGICAINKFIPW</sequence>
<accession>Q7CQD5</accession>
<comment type="function">
    <text evidence="1">PhoP-regulated transcription is redox-sensitive, being activated when the periplasm becomes more reducing. MgrB acts between DsbA/DsbB and PhoP/PhoQ in this pathway. Represses PhoP/PhoQ signaling, possibly by binding to the periplasmic domain of PhoQ, altering its activity and that of downstream effector PhoP.</text>
</comment>
<comment type="subunit">
    <text evidence="1">May form homooligomers. Probably interacts with the periplasmic domain of PhoQ.</text>
</comment>
<comment type="subcellular location">
    <subcellularLocation>
        <location evidence="1">Cell inner membrane</location>
        <topology evidence="1">Single-pass membrane protein</topology>
    </subcellularLocation>
</comment>
<comment type="similarity">
    <text evidence="1">Belongs to the MgrB family.</text>
</comment>
<dbReference type="EMBL" id="AE006468">
    <property type="protein sequence ID" value="AAL20755.1"/>
    <property type="molecule type" value="Genomic_DNA"/>
</dbReference>
<dbReference type="RefSeq" id="WP_000714547.1">
    <property type="nucleotide sequence ID" value="NC_003197.2"/>
</dbReference>
<dbReference type="STRING" id="99287.STM1840"/>
<dbReference type="PaxDb" id="99287-STM1840"/>
<dbReference type="GeneID" id="66756315"/>
<dbReference type="KEGG" id="stm:STM1840"/>
<dbReference type="PATRIC" id="fig|99287.12.peg.1942"/>
<dbReference type="HOGENOM" id="CLU_208030_1_0_6"/>
<dbReference type="PhylomeDB" id="Q7CQD5"/>
<dbReference type="BioCyc" id="SENT99287:STM1840-MONOMER"/>
<dbReference type="Proteomes" id="UP000001014">
    <property type="component" value="Chromosome"/>
</dbReference>
<dbReference type="GO" id="GO:0005886">
    <property type="term" value="C:plasma membrane"/>
    <property type="evidence" value="ECO:0007669"/>
    <property type="project" value="UniProtKB-SubCell"/>
</dbReference>
<dbReference type="GO" id="GO:0070298">
    <property type="term" value="P:negative regulation of phosphorelay signal transduction system"/>
    <property type="evidence" value="ECO:0007669"/>
    <property type="project" value="UniProtKB-UniRule"/>
</dbReference>
<dbReference type="HAMAP" id="MF_01596">
    <property type="entry name" value="MgrB"/>
    <property type="match status" value="1"/>
</dbReference>
<dbReference type="InterPro" id="IPR020907">
    <property type="entry name" value="MgrB"/>
</dbReference>
<dbReference type="NCBIfam" id="NF007635">
    <property type="entry name" value="PRK10299.1"/>
    <property type="match status" value="1"/>
</dbReference>
<dbReference type="Pfam" id="PF13998">
    <property type="entry name" value="MgrB"/>
    <property type="match status" value="1"/>
</dbReference>